<accession>Q9P2E3</accession>
<accession>Q9BQM7</accession>
<accession>Q9BQM8</accession>
<accession>Q9H8C1</accession>
<accession>Q9H9S2</accession>
<accession>Q9NUM1</accession>
<accession>Q9NWW1</accession>
<dbReference type="EMBL" id="AB037825">
    <property type="protein sequence ID" value="BAA92642.1"/>
    <property type="status" value="ALT_INIT"/>
    <property type="molecule type" value="mRNA"/>
</dbReference>
<dbReference type="EMBL" id="AK000573">
    <property type="protein sequence ID" value="BAA91264.1"/>
    <property type="status" value="ALT_INIT"/>
    <property type="molecule type" value="mRNA"/>
</dbReference>
<dbReference type="EMBL" id="AK002139">
    <property type="protein sequence ID" value="BAA92102.1"/>
    <property type="molecule type" value="mRNA"/>
</dbReference>
<dbReference type="EMBL" id="AK022641">
    <property type="protein sequence ID" value="BAB14149.1"/>
    <property type="status" value="ALT_INIT"/>
    <property type="molecule type" value="mRNA"/>
</dbReference>
<dbReference type="EMBL" id="AK023836">
    <property type="protein sequence ID" value="BAB14696.1"/>
    <property type="status" value="ALT_SEQ"/>
    <property type="molecule type" value="mRNA"/>
</dbReference>
<dbReference type="EMBL" id="AL049766">
    <property type="status" value="NOT_ANNOTATED_CDS"/>
    <property type="molecule type" value="Genomic_DNA"/>
</dbReference>
<dbReference type="CCDS" id="CCDS13417.1">
    <molecule id="Q9P2E3-1"/>
</dbReference>
<dbReference type="RefSeq" id="NP_066363.1">
    <molecule id="Q9P2E3-1"/>
    <property type="nucleotide sequence ID" value="NM_021035.3"/>
</dbReference>
<dbReference type="RefSeq" id="XP_006723899.1">
    <property type="nucleotide sequence ID" value="XM_006723836.1"/>
</dbReference>
<dbReference type="SMR" id="Q9P2E3"/>
<dbReference type="BioGRID" id="121422">
    <property type="interactions" value="71"/>
</dbReference>
<dbReference type="FunCoup" id="Q9P2E3">
    <property type="interactions" value="1249"/>
</dbReference>
<dbReference type="IntAct" id="Q9P2E3">
    <property type="interactions" value="50"/>
</dbReference>
<dbReference type="MINT" id="Q9P2E3"/>
<dbReference type="STRING" id="9606.ENSP00000360817"/>
<dbReference type="GlyGen" id="Q9P2E3">
    <property type="glycosylation" value="1 site, 1 N-linked glycan (1 site)"/>
</dbReference>
<dbReference type="iPTMnet" id="Q9P2E3"/>
<dbReference type="MetOSite" id="Q9P2E3"/>
<dbReference type="PhosphoSitePlus" id="Q9P2E3"/>
<dbReference type="SwissPalm" id="Q9P2E3"/>
<dbReference type="BioMuta" id="ZNFX1"/>
<dbReference type="DMDM" id="23821814"/>
<dbReference type="jPOST" id="Q9P2E3"/>
<dbReference type="MassIVE" id="Q9P2E3"/>
<dbReference type="PaxDb" id="9606-ENSP00000379412"/>
<dbReference type="PeptideAtlas" id="Q9P2E3"/>
<dbReference type="ProteomicsDB" id="83792">
    <molecule id="Q9P2E3-1"/>
</dbReference>
<dbReference type="ProteomicsDB" id="83793">
    <molecule id="Q9P2E3-2"/>
</dbReference>
<dbReference type="Pumba" id="Q9P2E3"/>
<dbReference type="Antibodypedia" id="28464">
    <property type="antibodies" value="23 antibodies from 8 providers"/>
</dbReference>
<dbReference type="DNASU" id="57169"/>
<dbReference type="Ensembl" id="ENST00000371752.5">
    <molecule id="Q9P2E3-1"/>
    <property type="protein sequence ID" value="ENSP00000360817.1"/>
    <property type="gene ID" value="ENSG00000124201.15"/>
</dbReference>
<dbReference type="Ensembl" id="ENST00000396105.6">
    <molecule id="Q9P2E3-1"/>
    <property type="protein sequence ID" value="ENSP00000379412.1"/>
    <property type="gene ID" value="ENSG00000124201.15"/>
</dbReference>
<dbReference type="GeneID" id="57169"/>
<dbReference type="KEGG" id="hsa:57169"/>
<dbReference type="MANE-Select" id="ENST00000396105.6">
    <property type="protein sequence ID" value="ENSP00000379412.1"/>
    <property type="RefSeq nucleotide sequence ID" value="NM_021035.3"/>
    <property type="RefSeq protein sequence ID" value="NP_066363.1"/>
</dbReference>
<dbReference type="UCSC" id="uc002xui.5">
    <molecule id="Q9P2E3-1"/>
    <property type="organism name" value="human"/>
</dbReference>
<dbReference type="AGR" id="HGNC:29271"/>
<dbReference type="CTD" id="57169"/>
<dbReference type="DisGeNET" id="57169"/>
<dbReference type="GeneCards" id="ZNFX1"/>
<dbReference type="HGNC" id="HGNC:29271">
    <property type="gene designation" value="ZNFX1"/>
</dbReference>
<dbReference type="HPA" id="ENSG00000124201">
    <property type="expression patterns" value="Low tissue specificity"/>
</dbReference>
<dbReference type="MalaCards" id="ZNFX1"/>
<dbReference type="MIM" id="618931">
    <property type="type" value="gene"/>
</dbReference>
<dbReference type="MIM" id="619644">
    <property type="type" value="phenotype"/>
</dbReference>
<dbReference type="neXtProt" id="NX_Q9P2E3"/>
<dbReference type="OpenTargets" id="ENSG00000124201"/>
<dbReference type="PharmGKB" id="PA143485687"/>
<dbReference type="VEuPathDB" id="HostDB:ENSG00000124201"/>
<dbReference type="eggNOG" id="KOG1807">
    <property type="taxonomic scope" value="Eukaryota"/>
</dbReference>
<dbReference type="GeneTree" id="ENSGT00940000155154"/>
<dbReference type="HOGENOM" id="CLU_001066_0_1_1"/>
<dbReference type="InParanoid" id="Q9P2E3"/>
<dbReference type="OMA" id="PVCQVPI"/>
<dbReference type="OrthoDB" id="2423195at2759"/>
<dbReference type="PAN-GO" id="Q9P2E3">
    <property type="GO annotations" value="3 GO annotations based on evolutionary models"/>
</dbReference>
<dbReference type="PhylomeDB" id="Q9P2E3"/>
<dbReference type="TreeFam" id="TF323611"/>
<dbReference type="PathwayCommons" id="Q9P2E3"/>
<dbReference type="SignaLink" id="Q9P2E3"/>
<dbReference type="BioGRID-ORCS" id="57169">
    <property type="hits" value="21 hits in 1164 CRISPR screens"/>
</dbReference>
<dbReference type="CD-CODE" id="86762C76">
    <property type="entry name" value="ZNFX1 condensate"/>
</dbReference>
<dbReference type="ChiTaRS" id="ZNFX1">
    <property type="organism name" value="human"/>
</dbReference>
<dbReference type="GenomeRNAi" id="57169"/>
<dbReference type="Pharos" id="Q9P2E3">
    <property type="development level" value="Tdark"/>
</dbReference>
<dbReference type="PRO" id="PR:Q9P2E3"/>
<dbReference type="Proteomes" id="UP000005640">
    <property type="component" value="Chromosome 20"/>
</dbReference>
<dbReference type="RNAct" id="Q9P2E3">
    <property type="molecule type" value="protein"/>
</dbReference>
<dbReference type="Bgee" id="ENSG00000124201">
    <property type="expression patterns" value="Expressed in cardiac muscle of right atrium and 192 other cell types or tissues"/>
</dbReference>
<dbReference type="ExpressionAtlas" id="Q9P2E3">
    <property type="expression patterns" value="baseline and differential"/>
</dbReference>
<dbReference type="GO" id="GO:0010494">
    <property type="term" value="C:cytoplasmic stress granule"/>
    <property type="evidence" value="ECO:0000314"/>
    <property type="project" value="UniProtKB"/>
</dbReference>
<dbReference type="GO" id="GO:0005741">
    <property type="term" value="C:mitochondrial outer membrane"/>
    <property type="evidence" value="ECO:0000250"/>
    <property type="project" value="UniProtKB"/>
</dbReference>
<dbReference type="GO" id="GO:0031380">
    <property type="term" value="C:nuclear RNA-directed RNA polymerase complex"/>
    <property type="evidence" value="ECO:0000318"/>
    <property type="project" value="GO_Central"/>
</dbReference>
<dbReference type="GO" id="GO:0004386">
    <property type="term" value="F:helicase activity"/>
    <property type="evidence" value="ECO:0007669"/>
    <property type="project" value="InterPro"/>
</dbReference>
<dbReference type="GO" id="GO:0003723">
    <property type="term" value="F:RNA binding"/>
    <property type="evidence" value="ECO:0007005"/>
    <property type="project" value="UniProtKB"/>
</dbReference>
<dbReference type="GO" id="GO:0008270">
    <property type="term" value="F:zinc ion binding"/>
    <property type="evidence" value="ECO:0007669"/>
    <property type="project" value="UniProtKB-KW"/>
</dbReference>
<dbReference type="GO" id="GO:0002218">
    <property type="term" value="P:activation of innate immune response"/>
    <property type="evidence" value="ECO:0000250"/>
    <property type="project" value="UniProtKB"/>
</dbReference>
<dbReference type="GO" id="GO:0042742">
    <property type="term" value="P:defense response to bacterium"/>
    <property type="evidence" value="ECO:0000315"/>
    <property type="project" value="UniProtKB"/>
</dbReference>
<dbReference type="GO" id="GO:0051607">
    <property type="term" value="P:defense response to virus"/>
    <property type="evidence" value="ECO:0000315"/>
    <property type="project" value="UniProtKB"/>
</dbReference>
<dbReference type="GO" id="GO:0045087">
    <property type="term" value="P:innate immune response"/>
    <property type="evidence" value="ECO:0007669"/>
    <property type="project" value="UniProtKB-KW"/>
</dbReference>
<dbReference type="GO" id="GO:0045071">
    <property type="term" value="P:negative regulation of viral genome replication"/>
    <property type="evidence" value="ECO:0000250"/>
    <property type="project" value="UniProtKB"/>
</dbReference>
<dbReference type="GO" id="GO:0031048">
    <property type="term" value="P:regulatory ncRNA-mediated heterochromatin formation"/>
    <property type="evidence" value="ECO:0000318"/>
    <property type="project" value="GO_Central"/>
</dbReference>
<dbReference type="CDD" id="cd17936">
    <property type="entry name" value="EEXXEc_NFX1"/>
    <property type="match status" value="1"/>
</dbReference>
<dbReference type="CDD" id="cd06008">
    <property type="entry name" value="NF-X1-zinc-finger"/>
    <property type="match status" value="2"/>
</dbReference>
<dbReference type="CDD" id="cd18808">
    <property type="entry name" value="SF1_C_Upf1"/>
    <property type="match status" value="1"/>
</dbReference>
<dbReference type="FunFam" id="3.40.50.300:FF:000742">
    <property type="entry name" value="NFX1-type zinc finger-containing protein 1"/>
    <property type="match status" value="1"/>
</dbReference>
<dbReference type="FunFam" id="3.40.50.300:FF:001096">
    <property type="entry name" value="Zinc finger NFX1-type containing 1"/>
    <property type="match status" value="1"/>
</dbReference>
<dbReference type="FunFam" id="3.40.50.300:FF:001140">
    <property type="entry name" value="Zinc finger NFX1-type containing 1"/>
    <property type="match status" value="1"/>
</dbReference>
<dbReference type="Gene3D" id="3.40.50.300">
    <property type="entry name" value="P-loop containing nucleotide triphosphate hydrolases"/>
    <property type="match status" value="3"/>
</dbReference>
<dbReference type="InterPro" id="IPR016024">
    <property type="entry name" value="ARM-type_fold"/>
</dbReference>
<dbReference type="InterPro" id="IPR045055">
    <property type="entry name" value="DNA2/NAM7-like"/>
</dbReference>
<dbReference type="InterPro" id="IPR041679">
    <property type="entry name" value="DNA2/NAM7-like_C"/>
</dbReference>
<dbReference type="InterPro" id="IPR041677">
    <property type="entry name" value="DNA2/NAM7_AAA_11"/>
</dbReference>
<dbReference type="InterPro" id="IPR027417">
    <property type="entry name" value="P-loop_NTPase"/>
</dbReference>
<dbReference type="InterPro" id="IPR047187">
    <property type="entry name" value="SF1_C_Upf1"/>
</dbReference>
<dbReference type="InterPro" id="IPR046439">
    <property type="entry name" value="ZF_RZ_dom"/>
</dbReference>
<dbReference type="InterPro" id="IPR000967">
    <property type="entry name" value="Znf_NFX1"/>
</dbReference>
<dbReference type="PANTHER" id="PTHR10887">
    <property type="entry name" value="DNA2/NAM7 HELICASE FAMILY"/>
    <property type="match status" value="1"/>
</dbReference>
<dbReference type="PANTHER" id="PTHR10887:SF341">
    <property type="entry name" value="NFX1-TYPE ZINC FINGER-CONTAINING PROTEIN 1"/>
    <property type="match status" value="1"/>
</dbReference>
<dbReference type="Pfam" id="PF13086">
    <property type="entry name" value="AAA_11"/>
    <property type="match status" value="2"/>
</dbReference>
<dbReference type="Pfam" id="PF13087">
    <property type="entry name" value="AAA_12"/>
    <property type="match status" value="1"/>
</dbReference>
<dbReference type="Pfam" id="PF20173">
    <property type="entry name" value="ZnF_RZ-type"/>
    <property type="match status" value="1"/>
</dbReference>
<dbReference type="Pfam" id="PF25396">
    <property type="entry name" value="ZNFX1"/>
    <property type="match status" value="1"/>
</dbReference>
<dbReference type="SMART" id="SM00438">
    <property type="entry name" value="ZnF_NFX"/>
    <property type="match status" value="5"/>
</dbReference>
<dbReference type="SUPFAM" id="SSF48371">
    <property type="entry name" value="ARM repeat"/>
    <property type="match status" value="1"/>
</dbReference>
<dbReference type="SUPFAM" id="SSF52540">
    <property type="entry name" value="P-loop containing nucleoside triphosphate hydrolases"/>
    <property type="match status" value="1"/>
</dbReference>
<dbReference type="PROSITE" id="PS51981">
    <property type="entry name" value="ZF_RZ"/>
    <property type="match status" value="1"/>
</dbReference>
<sequence>MEERRPHLDARPRNSHTNHRGPVDGELPPRARNQANNPPANALRGGASHPGRHPRANNHPAAYWQREERFRAMGRNPHQGRRNQEGHASDEARDQRHDQENDTRWRNGNQDCRNRRPPWSNDNFQQWRTPHQKPTEQPQQAKKLGYKFLESLLQKDPSEVVITLATSLGLKELLSHSSMKSNFLELICQVLRKACSSKMDRQSVLHVLGILKNSKFLKVCLPAYVVGMITEPIPDIRNQYPEHISNIISLLQDLVSVFPASSVQETSMLVSLLPTSLNALRASGVDIEEETEKNLEKVQTIIEHLQEKRREGTLRVDTYTLVQPEAEDHVESYRTMPIYPTYNEVHLDERPFLRPNIISGKYDSTAIYLDTHFRLLREDFVRPLREGILELLQSFEDQGLRKRKFDDIRIYFDTRIITPMCSSSGIVYKVQFDTKPLKFVRWQNSKRLLYGSLVCMSKDNFETFLFATVSNREQEDLCRGIVQLCFNEQSQQLLAEVQPSDSFLMVETTAYFEAYRHVLEGLQEVQEEDVPFQRNIVECNSHVKEPRYLLMGGRYDFTPLIENPSATGEFLRNVEGLRHPRINVLDPGQWPSKEALKLDDSQMEALQFALTRELAIIQGPPGTGKTYVGLKIVQALLTNESVWQISLQKFPILVVCYTNHALDQFLEGIYNCQKTSIVRVGGRSNSEILKQFTLRELRNKREFRRNLPMHLRRAYMSIMTQMKESEQELHEGAKTLECTMRGVLREQYLQKYISPQHWESLMNGPVQDSEWICFQHWKHSMMLEWLGLGVGSFTQSVSPAGPENTAQAEGDEEEEGEEESSLIEIAEEADLIQADRVIEEEEVVRPQRRKKEESGADQELAKMLLAMRLDHCGTGTAAGQEQATGEWQTQRNQKKKMKKRVKDELRKLNTMTAAEANEIEDVWQLDLSSRWQLYRLWLQLYQADTRRKILSYERQYRTSAERMAELRLQEDLHILKDAQVVGMTTTGAAKYRQILQKVEPRIVIVEEAAEVLEAHTIATLSKACQHLILIGDHQQLRPSANVYDLAKNFNLEVSLFERLVKVNIPFVRLNYQHRMCPEIARLLTPHIYQDLENHPSVLKYEKIKGVSSNLFFVEHNFPEQEIQEGKSHQNQHEAHFVVELCKYFLCQEYLPSQITILTTYTGQLFCLRKLMPAKTFAGVRVHVVDKYQGEENDIILLSLVRSNQEGKVGFLQISNRICVALSRAKKGMYCIGNMQMLAKVPLWSKIIHTLRENNQIGPMLRLCCQNHPETHTLVSKASDFQKVPEGGCSLPCEFRLGCGHVCTRACHPYDSSHKEFQCMKPCQKVICQEGHRCPLVCFQECQPCQVKVPKTIPRCGHEQMVPCSVPESDFCCQEPCSKSLRCGHRCSHPCGEDCVQLCSEMVTIKLKCGHSQPVKCGHVEGLLYGGLLVKCTTKCGTILDCGHPCPGSCHSCFEGRFHERCQQPCKRLLICSHKCQEPCIGECPPCQRTCQNRCVHSQCKKKCGELCSPCVEPCVWRCQHYQCTKLCSEPCNRPPCYVPCTKLLVCGHPCIGLCGEPCPKKCRICHMDEVTQIFFGFEDEPDARFVQLEDCSHIFEVQALDRYMNEQKDDEVAIRLKVCPICQVPIRKNLRYGTSIKQRLEEIEIIKEKIQGSAGEIATSQERLKALLERKSLLHQLLPEDFLMLKEKLAQKNLSVKDLGLVENYISFYDHLASLWDSLKKMHVLEEKRVRTRLEQVHEWLAKKRLSFTSQELSDLRSEIQRLTYLVNLLTRYKIAEKKVKDSIAVEVYSVQNILEKTCKFTQEDEQLVQEKMEALKATLPCSGLGISEEERVQIVSAIGYPRGHWFKCRNGHIYVIGDCGGAMERGTCPDCKEVIGGTNHTLERSNQLASEMDGAQHAAWSDTANNLMNFEEIQGMM</sequence>
<protein>
    <recommendedName>
        <fullName evidence="13">NFX1-type zinc finger-containing protein 1</fullName>
    </recommendedName>
</protein>
<keyword id="KW-0025">Alternative splicing</keyword>
<keyword id="KW-0051">Antiviral defense</keyword>
<keyword id="KW-0175">Coiled coil</keyword>
<keyword id="KW-0963">Cytoplasm</keyword>
<keyword id="KW-0225">Disease variant</keyword>
<keyword id="KW-0391">Immunity</keyword>
<keyword id="KW-0399">Innate immunity</keyword>
<keyword id="KW-0472">Membrane</keyword>
<keyword id="KW-0479">Metal-binding</keyword>
<keyword id="KW-0496">Mitochondrion</keyword>
<keyword id="KW-1000">Mitochondrion outer membrane</keyword>
<keyword id="KW-1267">Proteomics identification</keyword>
<keyword id="KW-1185">Reference proteome</keyword>
<keyword id="KW-0677">Repeat</keyword>
<keyword id="KW-0694">RNA-binding</keyword>
<keyword id="KW-0862">Zinc</keyword>
<keyword id="KW-0863">Zinc-finger</keyword>
<organism>
    <name type="scientific">Homo sapiens</name>
    <name type="common">Human</name>
    <dbReference type="NCBI Taxonomy" id="9606"/>
    <lineage>
        <taxon>Eukaryota</taxon>
        <taxon>Metazoa</taxon>
        <taxon>Chordata</taxon>
        <taxon>Craniata</taxon>
        <taxon>Vertebrata</taxon>
        <taxon>Euteleostomi</taxon>
        <taxon>Mammalia</taxon>
        <taxon>Eutheria</taxon>
        <taxon>Euarchontoglires</taxon>
        <taxon>Primates</taxon>
        <taxon>Haplorrhini</taxon>
        <taxon>Catarrhini</taxon>
        <taxon>Hominidae</taxon>
        <taxon>Homo</taxon>
    </lineage>
</organism>
<gene>
    <name evidence="11 14" type="primary">ZNFX1</name>
    <name evidence="9" type="synonym">KIAA1404</name>
</gene>
<evidence type="ECO:0000250" key="1">
    <source>
        <dbReference type="UniProtKB" id="Q8R151"/>
    </source>
</evidence>
<evidence type="ECO:0000255" key="2"/>
<evidence type="ECO:0000255" key="3">
    <source>
        <dbReference type="PROSITE-ProRule" id="PRU01325"/>
    </source>
</evidence>
<evidence type="ECO:0000256" key="4">
    <source>
        <dbReference type="SAM" id="MobiDB-lite"/>
    </source>
</evidence>
<evidence type="ECO:0000269" key="5">
    <source>
    </source>
</evidence>
<evidence type="ECO:0000269" key="6">
    <source>
    </source>
</evidence>
<evidence type="ECO:0000269" key="7">
    <source>
    </source>
</evidence>
<evidence type="ECO:0000269" key="8">
    <source>
    </source>
</evidence>
<evidence type="ECO:0000303" key="9">
    <source>
    </source>
</evidence>
<evidence type="ECO:0000303" key="10">
    <source>
    </source>
</evidence>
<evidence type="ECO:0000303" key="11">
    <source>
    </source>
</evidence>
<evidence type="ECO:0000303" key="12">
    <source>
    </source>
</evidence>
<evidence type="ECO:0000305" key="13"/>
<evidence type="ECO:0000312" key="14">
    <source>
        <dbReference type="HGNC" id="HGNC:29271"/>
    </source>
</evidence>
<proteinExistence type="evidence at protein level"/>
<feature type="chain" id="PRO_0000050795" description="NFX1-type zinc finger-containing protein 1">
    <location>
        <begin position="1"/>
        <end position="1918"/>
    </location>
</feature>
<feature type="zinc finger region" description="NF-X1-type 1">
    <location>
        <begin position="1298"/>
        <end position="1320"/>
    </location>
</feature>
<feature type="zinc finger region" description="NF-X1-type 2">
    <location>
        <begin position="1330"/>
        <end position="1346"/>
    </location>
</feature>
<feature type="zinc finger region" description="NF-X1-type 3">
    <location>
        <begin position="1382"/>
        <end position="1400"/>
    </location>
</feature>
<feature type="zinc finger region" description="NF-X1-type 4">
    <location>
        <begin position="1441"/>
        <end position="1463"/>
    </location>
</feature>
<feature type="zinc finger region" description="NF-X1-type 5">
    <location>
        <begin position="1471"/>
        <end position="1488"/>
    </location>
</feature>
<feature type="zinc finger region" description="NF-X1-type 6">
    <location>
        <begin position="1546"/>
        <end position="1564"/>
    </location>
</feature>
<feature type="zinc finger region" description="RZ-type" evidence="3 12">
    <location>
        <begin position="1827"/>
        <end position="1898"/>
    </location>
</feature>
<feature type="region of interest" description="Disordered" evidence="4">
    <location>
        <begin position="1"/>
        <end position="58"/>
    </location>
</feature>
<feature type="region of interest" description="Disordered" evidence="4">
    <location>
        <begin position="75"/>
        <end position="140"/>
    </location>
</feature>
<feature type="region of interest" description="Disordered" evidence="4">
    <location>
        <begin position="796"/>
        <end position="819"/>
    </location>
</feature>
<feature type="region of interest" description="Disordered" evidence="4">
    <location>
        <begin position="876"/>
        <end position="896"/>
    </location>
</feature>
<feature type="coiled-coil region" evidence="2">
    <location>
        <begin position="286"/>
        <end position="313"/>
    </location>
</feature>
<feature type="coiled-coil region" evidence="2">
    <location>
        <begin position="886"/>
        <end position="967"/>
    </location>
</feature>
<feature type="coiled-coil region" evidence="2">
    <location>
        <begin position="1741"/>
        <end position="1820"/>
    </location>
</feature>
<feature type="compositionally biased region" description="Basic and acidic residues" evidence="4">
    <location>
        <begin position="1"/>
        <end position="12"/>
    </location>
</feature>
<feature type="compositionally biased region" description="Low complexity" evidence="4">
    <location>
        <begin position="30"/>
        <end position="42"/>
    </location>
</feature>
<feature type="compositionally biased region" description="Basic and acidic residues" evidence="4">
    <location>
        <begin position="82"/>
        <end position="105"/>
    </location>
</feature>
<feature type="compositionally biased region" description="Polar residues" evidence="4">
    <location>
        <begin position="120"/>
        <end position="129"/>
    </location>
</feature>
<feature type="compositionally biased region" description="Acidic residues" evidence="4">
    <location>
        <begin position="809"/>
        <end position="819"/>
    </location>
</feature>
<feature type="compositionally biased region" description="Polar residues" evidence="4">
    <location>
        <begin position="877"/>
        <end position="887"/>
    </location>
</feature>
<feature type="binding site" evidence="3">
    <location>
        <position position="1849"/>
    </location>
    <ligand>
        <name>Zn(2+)</name>
        <dbReference type="ChEBI" id="CHEBI:29105"/>
    </ligand>
</feature>
<feature type="binding site" evidence="3">
    <location>
        <position position="1853"/>
    </location>
    <ligand>
        <name>Zn(2+)</name>
        <dbReference type="ChEBI" id="CHEBI:29105"/>
    </ligand>
</feature>
<feature type="binding site" evidence="3">
    <location>
        <position position="1869"/>
    </location>
    <ligand>
        <name>Zn(2+)</name>
        <dbReference type="ChEBI" id="CHEBI:29105"/>
    </ligand>
</feature>
<feature type="binding site" evidence="3">
    <location>
        <position position="1872"/>
    </location>
    <ligand>
        <name>Zn(2+)</name>
        <dbReference type="ChEBI" id="CHEBI:29105"/>
    </ligand>
</feature>
<feature type="splice variant" id="VSP_002434" description="In isoform 2." evidence="10">
    <original>QRNQKKKMKKRVKD</original>
    <variation>VPCLVLMSADPAQP</variation>
    <location>
        <begin position="890"/>
        <end position="903"/>
    </location>
</feature>
<feature type="splice variant" id="VSP_002435" description="In isoform 2." evidence="10">
    <location>
        <begin position="904"/>
        <end position="1918"/>
    </location>
</feature>
<feature type="sequence variant" id="VAR_085313" description="In IMD91." evidence="7">
    <location>
        <begin position="133"/>
        <end position="1918"/>
    </location>
</feature>
<feature type="sequence variant" id="VAR_085314" description="In IMD91; uncertain significance." evidence="7">
    <original>R</original>
    <variation>Q</variation>
    <location>
        <position position="377"/>
    </location>
</feature>
<feature type="sequence variant" id="VAR_014078" description="In dbSNP:rs2664578.">
    <original>L</original>
    <variation>V</variation>
    <location>
        <position position="864"/>
    </location>
</feature>
<feature type="sequence variant" id="VAR_014079" description="In dbSNP:rs2273148.">
    <original>T</original>
    <variation>A</variation>
    <location>
        <position position="910"/>
    </location>
</feature>
<feature type="sequence variant" id="VAR_014080" description="In dbSNP:rs238221." evidence="5 6">
    <original>Q</original>
    <variation>H</variation>
    <location>
        <position position="924"/>
    </location>
</feature>
<feature type="sequence variant" id="VAR_085315" description="In IMD91." evidence="8">
    <location>
        <begin position="959"/>
        <end position="1918"/>
    </location>
</feature>
<feature type="sequence variant" id="VAR_085316" description="In IMD91; uncertain significance." evidence="7">
    <original>L</original>
    <variation>P</variation>
    <location>
        <position position="1051"/>
    </location>
</feature>
<feature type="sequence variant" id="VAR_085317" description="In IMD91; uncertain significance." evidence="7">
    <original>I</original>
    <variation>T</variation>
    <location>
        <position position="1154"/>
    </location>
</feature>
<feature type="sequence variant" id="VAR_024487" description="In dbSNP:rs6512577.">
    <original>M</original>
    <variation>I</variation>
    <location>
        <position position="1259"/>
    </location>
</feature>
<feature type="sequence variant" id="VAR_085318" description="In IMD91; uncertain significance." evidence="7">
    <original>C</original>
    <variation>S</variation>
    <location>
        <position position="1264"/>
    </location>
</feature>
<feature type="sequence variant" id="VAR_085319" description="In IMD91; uncertain significance." evidence="7">
    <original>C</original>
    <variation>S</variation>
    <location>
        <position position="1292"/>
    </location>
</feature>
<feature type="sequence variant" id="VAR_051504" description="In dbSNP:rs36068952.">
    <original>G</original>
    <variation>S</variation>
    <location>
        <position position="1297"/>
    </location>
</feature>
<feature type="sequence variant" id="VAR_014081" description="In dbSNP:rs238209." evidence="5">
    <original>T</original>
    <variation>I</variation>
    <location>
        <position position="1351"/>
    </location>
</feature>
<feature type="sequence conflict" description="In Ref. 2; BAB14696." evidence="13" ref="2">
    <original>C</original>
    <variation>S</variation>
    <location>
        <position position="738"/>
    </location>
</feature>
<feature type="sequence conflict" description="In Ref. 2; BAA92102." evidence="13" ref="2">
    <original>P</original>
    <variation>L</variation>
    <location>
        <position position="755"/>
    </location>
</feature>
<feature type="sequence conflict" description="In Ref. 2; BAB14696." evidence="13" ref="2">
    <original>R</original>
    <variation>H</variation>
    <location>
        <position position="891"/>
    </location>
</feature>
<feature type="sequence conflict" description="In Ref. 2; BAB14696." evidence="13" ref="2">
    <original>L</original>
    <variation>P</variation>
    <location>
        <position position="1715"/>
    </location>
</feature>
<feature type="sequence conflict" description="In Ref. 2; BAA91264." evidence="13" ref="2">
    <original>K</original>
    <variation>Q</variation>
    <location>
        <position position="1743"/>
    </location>
</feature>
<feature type="sequence conflict" description="In Ref. 2; BAB14696." evidence="13" ref="2">
    <original>Y</original>
    <variation>N</variation>
    <location>
        <position position="1773"/>
    </location>
</feature>
<feature type="sequence conflict" description="In Ref. 2; BAB14696." evidence="13" ref="2">
    <original>V</original>
    <variation>E</variation>
    <location>
        <position position="1856"/>
    </location>
</feature>
<name>ZNFX1_HUMAN</name>
<reference key="1">
    <citation type="journal article" date="2000" name="DNA Res.">
        <title>Prediction of the coding sequences of unidentified human genes. XVI. The complete sequences of 150 new cDNA clones from brain which code for large proteins in vitro.</title>
        <authorList>
            <person name="Nagase T."/>
            <person name="Kikuno R."/>
            <person name="Ishikawa K."/>
            <person name="Hirosawa M."/>
            <person name="Ohara O."/>
        </authorList>
    </citation>
    <scope>NUCLEOTIDE SEQUENCE [LARGE SCALE MRNA] (ISOFORM 1)</scope>
    <scope>TISSUE SPECIFICITY</scope>
    <scope>VARIANTS HIS-924 AND ILE-1351</scope>
    <source>
        <tissue>Brain</tissue>
    </source>
</reference>
<reference key="2">
    <citation type="journal article" date="2004" name="Nat. Genet.">
        <title>Complete sequencing and characterization of 21,243 full-length human cDNAs.</title>
        <authorList>
            <person name="Ota T."/>
            <person name="Suzuki Y."/>
            <person name="Nishikawa T."/>
            <person name="Otsuki T."/>
            <person name="Sugiyama T."/>
            <person name="Irie R."/>
            <person name="Wakamatsu A."/>
            <person name="Hayashi K."/>
            <person name="Sato H."/>
            <person name="Nagai K."/>
            <person name="Kimura K."/>
            <person name="Makita H."/>
            <person name="Sekine M."/>
            <person name="Obayashi M."/>
            <person name="Nishi T."/>
            <person name="Shibahara T."/>
            <person name="Tanaka T."/>
            <person name="Ishii S."/>
            <person name="Yamamoto J."/>
            <person name="Saito K."/>
            <person name="Kawai Y."/>
            <person name="Isono Y."/>
            <person name="Nakamura Y."/>
            <person name="Nagahari K."/>
            <person name="Murakami K."/>
            <person name="Yasuda T."/>
            <person name="Iwayanagi T."/>
            <person name="Wagatsuma M."/>
            <person name="Shiratori A."/>
            <person name="Sudo H."/>
            <person name="Hosoiri T."/>
            <person name="Kaku Y."/>
            <person name="Kodaira H."/>
            <person name="Kondo H."/>
            <person name="Sugawara M."/>
            <person name="Takahashi M."/>
            <person name="Kanda K."/>
            <person name="Yokoi T."/>
            <person name="Furuya T."/>
            <person name="Kikkawa E."/>
            <person name="Omura Y."/>
            <person name="Abe K."/>
            <person name="Kamihara K."/>
            <person name="Katsuta N."/>
            <person name="Sato K."/>
            <person name="Tanikawa M."/>
            <person name="Yamazaki M."/>
            <person name="Ninomiya K."/>
            <person name="Ishibashi T."/>
            <person name="Yamashita H."/>
            <person name="Murakawa K."/>
            <person name="Fujimori K."/>
            <person name="Tanai H."/>
            <person name="Kimata M."/>
            <person name="Watanabe M."/>
            <person name="Hiraoka S."/>
            <person name="Chiba Y."/>
            <person name="Ishida S."/>
            <person name="Ono Y."/>
            <person name="Takiguchi S."/>
            <person name="Watanabe S."/>
            <person name="Yosida M."/>
            <person name="Hotuta T."/>
            <person name="Kusano J."/>
            <person name="Kanehori K."/>
            <person name="Takahashi-Fujii A."/>
            <person name="Hara H."/>
            <person name="Tanase T.-O."/>
            <person name="Nomura Y."/>
            <person name="Togiya S."/>
            <person name="Komai F."/>
            <person name="Hara R."/>
            <person name="Takeuchi K."/>
            <person name="Arita M."/>
            <person name="Imose N."/>
            <person name="Musashino K."/>
            <person name="Yuuki H."/>
            <person name="Oshima A."/>
            <person name="Sasaki N."/>
            <person name="Aotsuka S."/>
            <person name="Yoshikawa Y."/>
            <person name="Matsunawa H."/>
            <person name="Ichihara T."/>
            <person name="Shiohata N."/>
            <person name="Sano S."/>
            <person name="Moriya S."/>
            <person name="Momiyama H."/>
            <person name="Satoh N."/>
            <person name="Takami S."/>
            <person name="Terashima Y."/>
            <person name="Suzuki O."/>
            <person name="Nakagawa S."/>
            <person name="Senoh A."/>
            <person name="Mizoguchi H."/>
            <person name="Goto Y."/>
            <person name="Shimizu F."/>
            <person name="Wakebe H."/>
            <person name="Hishigaki H."/>
            <person name="Watanabe T."/>
            <person name="Sugiyama A."/>
            <person name="Takemoto M."/>
            <person name="Kawakami B."/>
            <person name="Yamazaki M."/>
            <person name="Watanabe K."/>
            <person name="Kumagai A."/>
            <person name="Itakura S."/>
            <person name="Fukuzumi Y."/>
            <person name="Fujimori Y."/>
            <person name="Komiyama M."/>
            <person name="Tashiro H."/>
            <person name="Tanigami A."/>
            <person name="Fujiwara T."/>
            <person name="Ono T."/>
            <person name="Yamada K."/>
            <person name="Fujii Y."/>
            <person name="Ozaki K."/>
            <person name="Hirao M."/>
            <person name="Ohmori Y."/>
            <person name="Kawabata A."/>
            <person name="Hikiji T."/>
            <person name="Kobatake N."/>
            <person name="Inagaki H."/>
            <person name="Ikema Y."/>
            <person name="Okamoto S."/>
            <person name="Okitani R."/>
            <person name="Kawakami T."/>
            <person name="Noguchi S."/>
            <person name="Itoh T."/>
            <person name="Shigeta K."/>
            <person name="Senba T."/>
            <person name="Matsumura K."/>
            <person name="Nakajima Y."/>
            <person name="Mizuno T."/>
            <person name="Morinaga M."/>
            <person name="Sasaki M."/>
            <person name="Togashi T."/>
            <person name="Oyama M."/>
            <person name="Hata H."/>
            <person name="Watanabe M."/>
            <person name="Komatsu T."/>
            <person name="Mizushima-Sugano J."/>
            <person name="Satoh T."/>
            <person name="Shirai Y."/>
            <person name="Takahashi Y."/>
            <person name="Nakagawa K."/>
            <person name="Okumura K."/>
            <person name="Nagase T."/>
            <person name="Nomura N."/>
            <person name="Kikuchi H."/>
            <person name="Masuho Y."/>
            <person name="Yamashita R."/>
            <person name="Nakai K."/>
            <person name="Yada T."/>
            <person name="Nakamura Y."/>
            <person name="Ohara O."/>
            <person name="Isogai T."/>
            <person name="Sugano S."/>
        </authorList>
    </citation>
    <scope>NUCLEOTIDE SEQUENCE [LARGE SCALE MRNA] (ISOFORMS 1 AND 2)</scope>
    <scope>VARIANT HIS-924</scope>
    <source>
        <tissue>Neuron</tissue>
        <tissue>Placenta</tissue>
    </source>
</reference>
<reference key="3">
    <citation type="journal article" date="2001" name="Nature">
        <title>The DNA sequence and comparative analysis of human chromosome 20.</title>
        <authorList>
            <person name="Deloukas P."/>
            <person name="Matthews L.H."/>
            <person name="Ashurst J.L."/>
            <person name="Burton J."/>
            <person name="Gilbert J.G.R."/>
            <person name="Jones M."/>
            <person name="Stavrides G."/>
            <person name="Almeida J.P."/>
            <person name="Babbage A.K."/>
            <person name="Bagguley C.L."/>
            <person name="Bailey J."/>
            <person name="Barlow K.F."/>
            <person name="Bates K.N."/>
            <person name="Beard L.M."/>
            <person name="Beare D.M."/>
            <person name="Beasley O.P."/>
            <person name="Bird C.P."/>
            <person name="Blakey S.E."/>
            <person name="Bridgeman A.M."/>
            <person name="Brown A.J."/>
            <person name="Buck D."/>
            <person name="Burrill W.D."/>
            <person name="Butler A.P."/>
            <person name="Carder C."/>
            <person name="Carter N.P."/>
            <person name="Chapman J.C."/>
            <person name="Clamp M."/>
            <person name="Clark G."/>
            <person name="Clark L.N."/>
            <person name="Clark S.Y."/>
            <person name="Clee C.M."/>
            <person name="Clegg S."/>
            <person name="Cobley V.E."/>
            <person name="Collier R.E."/>
            <person name="Connor R.E."/>
            <person name="Corby N.R."/>
            <person name="Coulson A."/>
            <person name="Coville G.J."/>
            <person name="Deadman R."/>
            <person name="Dhami P.D."/>
            <person name="Dunn M."/>
            <person name="Ellington A.G."/>
            <person name="Frankland J.A."/>
            <person name="Fraser A."/>
            <person name="French L."/>
            <person name="Garner P."/>
            <person name="Grafham D.V."/>
            <person name="Griffiths C."/>
            <person name="Griffiths M.N.D."/>
            <person name="Gwilliam R."/>
            <person name="Hall R.E."/>
            <person name="Hammond S."/>
            <person name="Harley J.L."/>
            <person name="Heath P.D."/>
            <person name="Ho S."/>
            <person name="Holden J.L."/>
            <person name="Howden P.J."/>
            <person name="Huckle E."/>
            <person name="Hunt A.R."/>
            <person name="Hunt S.E."/>
            <person name="Jekosch K."/>
            <person name="Johnson C.M."/>
            <person name="Johnson D."/>
            <person name="Kay M.P."/>
            <person name="Kimberley A.M."/>
            <person name="King A."/>
            <person name="Knights A."/>
            <person name="Laird G.K."/>
            <person name="Lawlor S."/>
            <person name="Lehvaeslaiho M.H."/>
            <person name="Leversha M.A."/>
            <person name="Lloyd C."/>
            <person name="Lloyd D.M."/>
            <person name="Lovell J.D."/>
            <person name="Marsh V.L."/>
            <person name="Martin S.L."/>
            <person name="McConnachie L.J."/>
            <person name="McLay K."/>
            <person name="McMurray A.A."/>
            <person name="Milne S.A."/>
            <person name="Mistry D."/>
            <person name="Moore M.J.F."/>
            <person name="Mullikin J.C."/>
            <person name="Nickerson T."/>
            <person name="Oliver K."/>
            <person name="Parker A."/>
            <person name="Patel R."/>
            <person name="Pearce T.A.V."/>
            <person name="Peck A.I."/>
            <person name="Phillimore B.J.C.T."/>
            <person name="Prathalingam S.R."/>
            <person name="Plumb R.W."/>
            <person name="Ramsay H."/>
            <person name="Rice C.M."/>
            <person name="Ross M.T."/>
            <person name="Scott C.E."/>
            <person name="Sehra H.K."/>
            <person name="Shownkeen R."/>
            <person name="Sims S."/>
            <person name="Skuce C.D."/>
            <person name="Smith M.L."/>
            <person name="Soderlund C."/>
            <person name="Steward C.A."/>
            <person name="Sulston J.E."/>
            <person name="Swann R.M."/>
            <person name="Sycamore N."/>
            <person name="Taylor R."/>
            <person name="Tee L."/>
            <person name="Thomas D.W."/>
            <person name="Thorpe A."/>
            <person name="Tracey A."/>
            <person name="Tromans A.C."/>
            <person name="Vaudin M."/>
            <person name="Wall M."/>
            <person name="Wallis J.M."/>
            <person name="Whitehead S.L."/>
            <person name="Whittaker P."/>
            <person name="Willey D.L."/>
            <person name="Williams L."/>
            <person name="Williams S.A."/>
            <person name="Wilming L."/>
            <person name="Wray P.W."/>
            <person name="Hubbard T."/>
            <person name="Durbin R.M."/>
            <person name="Bentley D.R."/>
            <person name="Beck S."/>
            <person name="Rogers J."/>
        </authorList>
    </citation>
    <scope>NUCLEOTIDE SEQUENCE [LARGE SCALE GENOMIC DNA]</scope>
</reference>
<reference key="4">
    <citation type="journal article" date="2021" name="J. Allergy Clin. Immunol.">
        <title>Multisystem inflammation and susceptibility to viral infections in human ZNFX1 deficiency.</title>
        <authorList>
            <person name="Vavassori S."/>
            <person name="Chou J."/>
            <person name="Faletti L.E."/>
            <person name="Haunerdinger V."/>
            <person name="Opitz L."/>
            <person name="Joset P."/>
            <person name="Fraser C.J."/>
            <person name="Prader S."/>
            <person name="Gao X."/>
            <person name="Schuch L.A."/>
            <person name="Wagner M."/>
            <person name="Hoefele J."/>
            <person name="Maccari M.E."/>
            <person name="Zhu Y."/>
            <person name="Elakis G."/>
            <person name="Gabbett M.T."/>
            <person name="Forstner M."/>
            <person name="Omran H."/>
            <person name="Kaiser T."/>
            <person name="Kessler C."/>
            <person name="Olbrich H."/>
            <person name="Frosk P."/>
            <person name="Almutairi A."/>
            <person name="Platt C.D."/>
            <person name="Elkins M."/>
            <person name="Weeks S."/>
            <person name="Rubin T."/>
            <person name="Planas R."/>
            <person name="Marchetti T."/>
            <person name="Koovely D."/>
            <person name="Klaembt V."/>
            <person name="Soliman N.A."/>
            <person name="von Hardenberg S."/>
            <person name="Klemann C."/>
            <person name="Baumann U."/>
            <person name="Lenz D."/>
            <person name="Klein-Franke A."/>
            <person name="Schwemmle M."/>
            <person name="Huber M."/>
            <person name="Sturm E."/>
            <person name="Hartleif S."/>
            <person name="Haeffner K."/>
            <person name="Gimpel C."/>
            <person name="Brotschi B."/>
            <person name="Laube G."/>
            <person name="Guengoer T."/>
            <person name="Buckley M.F."/>
            <person name="Kottke R."/>
            <person name="Staufner C."/>
            <person name="Hildebrandt F."/>
            <person name="Reu-Hofer S."/>
            <person name="Moll S."/>
            <person name="Weber A."/>
            <person name="Kaur H."/>
            <person name="Ehl S."/>
            <person name="Hiller S."/>
            <person name="Geha R."/>
            <person name="Roscioli T."/>
            <person name="Griese M."/>
            <person name="Pachlopnik Schmid J."/>
        </authorList>
    </citation>
    <scope>INVOLVEMENT IN IMD91</scope>
    <scope>FUNCTION</scope>
    <scope>TISSUE SPECIFICITY</scope>
    <scope>VARIANTS IMD91 133-LYS--MET-1918 DEL; GLN-377; PRO-1051; THR-1154; SER-1264 AND SER-1292</scope>
</reference>
<reference key="5">
    <citation type="journal article" date="2021" name="Nature">
        <title>Ubiquitylation of lipopolysaccharide by RNF213 during bacterial infection.</title>
        <authorList>
            <person name="Otten E.G."/>
            <person name="Werner E."/>
            <person name="Crespillo-Casado A."/>
            <person name="Boyle K.B."/>
            <person name="Dharamdasani V."/>
            <person name="Pathe C."/>
            <person name="Santhanam B."/>
            <person name="Randow F."/>
        </authorList>
    </citation>
    <scope>RZ-TYPE ZINC-FINGER</scope>
</reference>
<reference key="6">
    <citation type="journal article" date="2021" name="Proc. Natl. Acad. Sci. U.S.A.">
        <title>Inherited deficiency of stress granule ZNFX1 in patients with monocytosis and mycobacterial disease.</title>
        <authorList>
            <person name="Le Voyer T."/>
            <person name="Neehus A.L."/>
            <person name="Yang R."/>
            <person name="Ogishi M."/>
            <person name="Rosain J."/>
            <person name="Alroqi F."/>
            <person name="Alshalan M."/>
            <person name="Blumental S."/>
            <person name="Al Ali F."/>
            <person name="Khan T."/>
            <person name="Ata M."/>
            <person name="Rozen L."/>
            <person name="Demulder A."/>
            <person name="Bastard P."/>
            <person name="Gruber C."/>
            <person name="Roynard M."/>
            <person name="Seeleuthener Y."/>
            <person name="Rapaport F."/>
            <person name="Bigio B."/>
            <person name="Chrabieh M."/>
            <person name="Sng D."/>
            <person name="Berteloot L."/>
            <person name="Boddaert N."/>
            <person name="Rozenberg F."/>
            <person name="Al-Muhsen S."/>
            <person name="Bertoli-Avella A."/>
            <person name="Abel L."/>
            <person name="Bogunovic D."/>
            <person name="Marr N."/>
            <person name="Mansouri D."/>
            <person name="Al Mutairi F."/>
            <person name="Beziat V."/>
            <person name="Weil D."/>
            <person name="Mahdaviani S.A."/>
            <person name="Ferster A."/>
            <person name="Zhang S.Y."/>
            <person name="Reversade B."/>
            <person name="Boisson-Dupuis S."/>
            <person name="Casanova J.L."/>
            <person name="Bustamante J."/>
        </authorList>
    </citation>
    <scope>FUNCTION</scope>
    <scope>SUBCELLULAR LOCATION</scope>
    <scope>INVOLVEMENT IN IMD91</scope>
    <scope>VARIANT IMD91 959-SER--MET-1918 DEL</scope>
</reference>
<comment type="function">
    <text evidence="1 7 8">RNA-binding protein that initiates the antiviral response and is required to restrict the replication of RNA viruses (PubMed:33872655). Acts as a double-stranded RNA (dsRNA) sensor that recognizes viral RNA and then interacts with MAVS to initiate the type I interferon response (By similarity). Also required for immunity against some bacteria, such as mycobacteria (PubMed:33876776).</text>
</comment>
<comment type="subunit">
    <text evidence="1">Interacts with MAVS.</text>
</comment>
<comment type="subcellular location">
    <subcellularLocation>
        <location evidence="1">Mitochondrion outer membrane</location>
    </subcellularLocation>
    <subcellularLocation>
        <location evidence="8">Cytoplasm</location>
        <location evidence="8">Stress granule</location>
    </subcellularLocation>
</comment>
<comment type="alternative products">
    <event type="alternative splicing"/>
    <isoform>
        <id>Q9P2E3-1</id>
        <name>1</name>
        <sequence type="displayed"/>
    </isoform>
    <isoform>
        <id>Q9P2E3-2</id>
        <name>2</name>
        <sequence type="described" ref="VSP_002434 VSP_002435"/>
    </isoform>
</comment>
<comment type="tissue specificity">
    <text evidence="5 7">Widely expressed.</text>
</comment>
<comment type="disease" evidence="7 8">
    <disease id="DI-06288">
        <name>Immunodeficiency 91 and hyperinflammation</name>
        <acronym>IMD91</acronym>
        <description>An autosomal recessive disorder characterized by immunodeficiency, recurrent infections, and hyperinflammation with systemic involvement. Most patients eventually develop hepatic or renal failure, may have compromised neurologic function, lymphadenopathy or hepatosplenomegaly. Early death often occurs due to multiorgan failure.</description>
        <dbReference type="MIM" id="619644"/>
    </disease>
    <text>The disease is caused by variants affecting the gene represented in this entry.</text>
</comment>
<comment type="similarity">
    <text evidence="13">Belongs to the ZNFX1 family.</text>
</comment>
<comment type="sequence caution" evidence="13">
    <conflict type="erroneous initiation">
        <sequence resource="EMBL-CDS" id="BAA91264"/>
    </conflict>
</comment>
<comment type="sequence caution" evidence="13">
    <conflict type="erroneous initiation">
        <sequence resource="EMBL-CDS" id="BAA92642"/>
    </conflict>
</comment>
<comment type="sequence caution" evidence="13">
    <conflict type="erroneous initiation">
        <sequence resource="EMBL-CDS" id="BAB14149"/>
    </conflict>
</comment>
<comment type="sequence caution" evidence="13">
    <conflict type="erroneous termination">
        <sequence resource="EMBL-CDS" id="BAB14696"/>
    </conflict>
    <text>Truncated C-terminus.</text>
</comment>